<protein>
    <recommendedName>
        <fullName>Zona pellucida sperm-binding protein 3</fullName>
    </recommendedName>
    <alternativeName>
        <fullName>Sperm receptor</fullName>
    </alternativeName>
    <alternativeName>
        <fullName>Zona pellucida C protein</fullName>
    </alternativeName>
    <alternativeName>
        <fullName>Zona pellucida glycoprotein 3</fullName>
        <shortName>Zp-3</shortName>
    </alternativeName>
    <component>
        <recommendedName>
            <fullName>Processed zona pellucida sperm-binding protein 3</fullName>
        </recommendedName>
    </component>
</protein>
<evidence type="ECO:0000250" key="1"/>
<evidence type="ECO:0000255" key="2"/>
<evidence type="ECO:0000255" key="3">
    <source>
        <dbReference type="PROSITE-ProRule" id="PRU00375"/>
    </source>
</evidence>
<evidence type="ECO:0000269" key="4">
    <source>
    </source>
</evidence>
<evidence type="ECO:0000269" key="5">
    <source>
    </source>
</evidence>
<evidence type="ECO:0000269" key="6">
    <source>
    </source>
</evidence>
<evidence type="ECO:0000305" key="7"/>
<evidence type="ECO:0007829" key="8">
    <source>
        <dbReference type="PDB" id="3NK3"/>
    </source>
</evidence>
<evidence type="ECO:0007829" key="9">
    <source>
        <dbReference type="PDB" id="3NK4"/>
    </source>
</evidence>
<feature type="signal peptide" evidence="4">
    <location>
        <begin position="1"/>
        <end position="20"/>
    </location>
</feature>
<feature type="chain" id="PRO_0000405431" description="Zona pellucida sperm-binding protein 3">
    <location>
        <begin position="21"/>
        <end position="360"/>
    </location>
</feature>
<feature type="chain" id="PRO_0000405432" description="Processed zona pellucida sperm-binding protein 3">
    <location>
        <begin position="21"/>
        <end status="unknown"/>
    </location>
</feature>
<feature type="propeptide" id="PRO_0000405433" description="Removed in mature form" evidence="1">
    <location>
        <begin position="361"/>
        <end position="437"/>
    </location>
</feature>
<feature type="topological domain" description="Extracellular" evidence="7">
    <location>
        <begin position="21"/>
        <end position="405"/>
    </location>
</feature>
<feature type="transmembrane region" description="Helical" evidence="2">
    <location>
        <begin position="406"/>
        <end position="426"/>
    </location>
</feature>
<feature type="topological domain" description="Cytoplasmic" evidence="2">
    <location>
        <begin position="427"/>
        <end position="437"/>
    </location>
</feature>
<feature type="domain" description="ZP" evidence="3">
    <location>
        <begin position="57"/>
        <end position="320"/>
    </location>
</feature>
<feature type="region of interest" description="Extracellular hydrophobic patch">
    <location>
        <begin position="368"/>
        <end position="380"/>
    </location>
</feature>
<feature type="glycosylation site" description="N-linked (GlcNAc...) asparagine" evidence="6">
    <location>
        <position position="159"/>
    </location>
</feature>
<feature type="glycosylation site" description="O-linked (GalNAc...) threonine" evidence="6">
    <location>
        <position position="168"/>
    </location>
</feature>
<feature type="disulfide bond" evidence="6">
    <location>
        <begin position="58"/>
        <end position="152"/>
    </location>
</feature>
<feature type="disulfide bond" evidence="6">
    <location>
        <begin position="90"/>
        <end position="111"/>
    </location>
</feature>
<feature type="disulfide bond" evidence="6">
    <location>
        <begin position="229"/>
        <end position="295"/>
    </location>
</feature>
<feature type="disulfide bond" evidence="6">
    <location>
        <begin position="251"/>
        <end position="335"/>
    </location>
</feature>
<feature type="disulfide bond" evidence="6">
    <location>
        <begin position="313"/>
        <end position="332"/>
    </location>
</feature>
<feature type="disulfide bond" evidence="6">
    <location>
        <begin position="334"/>
        <end position="340"/>
    </location>
</feature>
<feature type="mutagenesis site" description="Abolishes secretion of processed zona pellucida sperm-binding protein 3; when associated with A-152." evidence="6">
    <original>C</original>
    <variation>A</variation>
    <location>
        <position position="58"/>
    </location>
</feature>
<feature type="mutagenesis site" description="Abolishes secretion of processed zona pellucida sperm-binding protein 3; when associated with A-111." evidence="6">
    <original>C</original>
    <variation>A</variation>
    <location>
        <position position="90"/>
    </location>
</feature>
<feature type="mutagenesis site" description="Abolishes secretion of processed zona pellucida sperm-binding protein 3; when associated with A-90.">
    <original>C</original>
    <variation>A</variation>
    <location>
        <position position="111"/>
    </location>
</feature>
<feature type="mutagenesis site" description="Impaired homodimerization and abolished secretion of processed zona pellucida sperm-binding protein 3." evidence="6">
    <original>R</original>
    <variation>A</variation>
    <location>
        <position position="142"/>
    </location>
</feature>
<feature type="mutagenesis site" description="Abolishes secretion of processed zona pellucida sperm-binding protein 3; when associated with A-58." evidence="6">
    <original>C</original>
    <variation>A</variation>
    <location>
        <position position="152"/>
    </location>
</feature>
<feature type="mutagenesis site" description="Loss of N-glycosylation." evidence="6">
    <original>N</original>
    <variation>Q</variation>
    <location>
        <position position="159"/>
    </location>
</feature>
<feature type="mutagenesis site" description="Loss of O-glycosylation. No effect on secretion. Reduces binding to the sperm head by about 80%." evidence="6">
    <original>T</original>
    <variation>A</variation>
    <location>
        <position position="168"/>
    </location>
</feature>
<feature type="mutagenesis site" description="No effect on secretion." evidence="6">
    <original>E</original>
    <variation>A</variation>
    <location>
        <position position="196"/>
    </location>
</feature>
<feature type="mutagenesis site" description="Impaired secretion of processed zona pellucida sperm-binding protein 3; when associated with A-295." evidence="6">
    <original>C</original>
    <variation>A</variation>
    <location>
        <position position="229"/>
    </location>
</feature>
<feature type="mutagenesis site" description="Abolishes secretion of processed zona pellucida sperm-binding protein 3." evidence="6">
    <original>P</original>
    <variation>D</variation>
    <location>
        <position position="235"/>
    </location>
</feature>
<feature type="mutagenesis site" description="No effect on dimerization or secretion." evidence="6">
    <original>P</original>
    <variation>A</variation>
    <location>
        <position position="241"/>
    </location>
</feature>
<feature type="mutagenesis site" description="Abolishes secretion of processed zona pellucida sperm-binding protein 3; when associated with A-335." evidence="6">
    <original>C</original>
    <variation>A</variation>
    <location>
        <position position="251"/>
    </location>
</feature>
<feature type="mutagenesis site" description="Abolishes secretion of processed zona pellucida sperm-binding protein 3." evidence="6">
    <original>Y</original>
    <variation>A</variation>
    <location>
        <position position="292"/>
    </location>
</feature>
<feature type="mutagenesis site" description="Impaired secretion of processed zona pellucida sperm-binding protein 3; when associated with A-229.">
    <original>C</original>
    <variation>A</variation>
    <location>
        <position position="295"/>
    </location>
</feature>
<feature type="mutagenesis site" description="Abolishes secretion of processed zona pellucida sperm-binding protein 3; when associated with A-332." evidence="6">
    <original>C</original>
    <variation>A</variation>
    <location>
        <position position="313"/>
    </location>
</feature>
<feature type="mutagenesis site" description="Abolishes secretion of processed zona pellucida sperm-binding protein 3; when associated with A-313." evidence="6">
    <original>C</original>
    <variation>A</variation>
    <location>
        <position position="332"/>
    </location>
</feature>
<feature type="mutagenesis site" description="Abolishes secretion of processed zona pellucida sperm-binding protein 3; when associated with A-340." evidence="6">
    <original>C</original>
    <variation>A</variation>
    <location>
        <position position="334"/>
    </location>
</feature>
<feature type="mutagenesis site" description="Abolishes secretion of processed zona pellucida sperm-binding protein 3; when associated with A-251." evidence="6">
    <original>C</original>
    <variation>A</variation>
    <location>
        <position position="335"/>
    </location>
</feature>
<feature type="mutagenesis site" description="Abolishes secretion of processed zona pellucida sperm-binding protein 3; when associated with A-334." evidence="6">
    <original>C</original>
    <variation>A</variation>
    <location>
        <position position="340"/>
    </location>
</feature>
<feature type="mutagenesis site" description="Abolishes cleavage of C-terminal propeptide." evidence="6">
    <original>RFRR</original>
    <variation>AFAA</variation>
    <location>
        <begin position="359"/>
        <end position="362"/>
    </location>
</feature>
<feature type="sequence conflict" description="In Ref. 2; AAV35184." evidence="7" ref="2">
    <original>A</original>
    <variation>V</variation>
    <location>
        <position position="43"/>
    </location>
</feature>
<feature type="sequence conflict" description="In Ref. 2; AAV35193/AAV35180/AAV35179." evidence="7" ref="2">
    <original>V</original>
    <variation>M</variation>
    <location>
        <position position="48"/>
    </location>
</feature>
<feature type="sequence conflict" description="In Ref. 1; BAA13760 and 3; BAA83418." evidence="7" ref="1 3">
    <original>G</original>
    <variation>C</variation>
    <location>
        <position position="424"/>
    </location>
</feature>
<feature type="sequence conflict" description="In Ref. 1; BAA13760." evidence="7" ref="1">
    <original>A</original>
    <variation>T</variation>
    <location>
        <position position="435"/>
    </location>
</feature>
<feature type="strand" evidence="9">
    <location>
        <begin position="53"/>
        <end position="58"/>
    </location>
</feature>
<feature type="strand" evidence="9">
    <location>
        <begin position="60"/>
        <end position="69"/>
    </location>
</feature>
<feature type="helix" evidence="9">
    <location>
        <begin position="80"/>
        <end position="82"/>
    </location>
</feature>
<feature type="strand" evidence="9">
    <location>
        <begin position="83"/>
        <end position="85"/>
    </location>
</feature>
<feature type="turn" evidence="9">
    <location>
        <begin position="86"/>
        <end position="89"/>
    </location>
</feature>
<feature type="strand" evidence="9">
    <location>
        <begin position="93"/>
        <end position="96"/>
    </location>
</feature>
<feature type="turn" evidence="9">
    <location>
        <begin position="97"/>
        <end position="100"/>
    </location>
</feature>
<feature type="strand" evidence="9">
    <location>
        <begin position="101"/>
        <end position="107"/>
    </location>
</feature>
<feature type="strand" evidence="9">
    <location>
        <begin position="114"/>
        <end position="117"/>
    </location>
</feature>
<feature type="strand" evidence="9">
    <location>
        <begin position="119"/>
        <end position="130"/>
    </location>
</feature>
<feature type="strand" evidence="9">
    <location>
        <begin position="140"/>
        <end position="143"/>
    </location>
</feature>
<feature type="strand" evidence="9">
    <location>
        <begin position="146"/>
        <end position="155"/>
    </location>
</feature>
<feature type="turn" evidence="8">
    <location>
        <begin position="171"/>
        <end position="173"/>
    </location>
</feature>
<feature type="strand" evidence="9">
    <location>
        <begin position="184"/>
        <end position="189"/>
    </location>
</feature>
<feature type="strand" evidence="9">
    <location>
        <begin position="193"/>
        <end position="196"/>
    </location>
</feature>
<feature type="strand" evidence="8">
    <location>
        <begin position="199"/>
        <end position="202"/>
    </location>
</feature>
<feature type="strand" evidence="9">
    <location>
        <begin position="207"/>
        <end position="214"/>
    </location>
</feature>
<feature type="strand" evidence="8">
    <location>
        <begin position="217"/>
        <end position="219"/>
    </location>
</feature>
<feature type="strand" evidence="9">
    <location>
        <begin position="222"/>
        <end position="235"/>
    </location>
</feature>
<feature type="strand" evidence="9">
    <location>
        <begin position="239"/>
        <end position="247"/>
    </location>
</feature>
<feature type="turn" evidence="9">
    <location>
        <begin position="248"/>
        <end position="250"/>
    </location>
</feature>
<feature type="helix" evidence="9">
    <location>
        <begin position="253"/>
        <end position="256"/>
    </location>
</feature>
<feature type="strand" evidence="9">
    <location>
        <begin position="273"/>
        <end position="279"/>
    </location>
</feature>
<feature type="strand" evidence="9">
    <location>
        <begin position="290"/>
        <end position="301"/>
    </location>
</feature>
<feature type="strand" evidence="9">
    <location>
        <begin position="313"/>
        <end position="316"/>
    </location>
</feature>
<feature type="turn" evidence="9">
    <location>
        <begin position="317"/>
        <end position="320"/>
    </location>
</feature>
<feature type="strand" evidence="9">
    <location>
        <begin position="321"/>
        <end position="327"/>
    </location>
</feature>
<feature type="helix" evidence="9">
    <location>
        <begin position="329"/>
        <end position="332"/>
    </location>
</feature>
<feature type="helix" evidence="9">
    <location>
        <begin position="333"/>
        <end position="337"/>
    </location>
</feature>
<feature type="strand" evidence="9">
    <location>
        <begin position="368"/>
        <end position="379"/>
    </location>
</feature>
<organism>
    <name type="scientific">Gallus gallus</name>
    <name type="common">Chicken</name>
    <dbReference type="NCBI Taxonomy" id="9031"/>
    <lineage>
        <taxon>Eukaryota</taxon>
        <taxon>Metazoa</taxon>
        <taxon>Chordata</taxon>
        <taxon>Craniata</taxon>
        <taxon>Vertebrata</taxon>
        <taxon>Euteleostomi</taxon>
        <taxon>Archelosauria</taxon>
        <taxon>Archosauria</taxon>
        <taxon>Dinosauria</taxon>
        <taxon>Saurischia</taxon>
        <taxon>Theropoda</taxon>
        <taxon>Coelurosauria</taxon>
        <taxon>Aves</taxon>
        <taxon>Neognathae</taxon>
        <taxon>Galloanserae</taxon>
        <taxon>Galliformes</taxon>
        <taxon>Phasianidae</taxon>
        <taxon>Phasianinae</taxon>
        <taxon>Gallus</taxon>
    </lineage>
</organism>
<sequence length="437" mass="46766">MQGGRVVLGLLCCLVAGVGSYTPWDISWAARGDPSAWSWGAEAHSRAVAGSHPVAVQCQEAQLVVTVHRDLFGTGRLINAADLTLGPAACKHSSLNAAHNTVTFAAGLHECGSVVQVTPDTLIYRTLINYDPSPASNPVIIRTNPAVIPIECHYPRRENVSSNAIRPTWSPFNSALSAEERLVFSLRLMSDDWSTERPFTGFQLGDILNIQAEVSTENHVPLRLFVDSCVAALSPDGDSSPHYAIIDFNGCLVDGRVDDTSSAFITPRPREDVLRFRIDVFRFAGDNRNLIYITCHLKVTPADQGPDPQNKACSFNKARNTWVPVEGSRDVCNCCETGNCEPPALSRRLNPMERWQSRRFRRDAGKEVAADVVIGPVLLSADPGAVGQQEEGGDGAAVMVPSVGTGLVCVAVAVALAAVGVAVGIARKGCTRTSAAV</sequence>
<reference key="1">
    <citation type="journal article" date="1999" name="Eur. J. Biochem.">
        <title>A 42-kDa glycoprotein from chicken egg-envelope, an avian homolog of the ZPC family glycoproteins in mammalian Zona pellucida. Its first identification, cDNA cloning and granulosa cell-specific expression.</title>
        <authorList>
            <person name="Takeuchi Y."/>
            <person name="Nishimura K."/>
            <person name="Aoki N."/>
            <person name="Adachi T."/>
            <person name="Sato C."/>
            <person name="Kitajima K."/>
            <person name="Matsuda T."/>
        </authorList>
    </citation>
    <scope>NUCLEOTIDE SEQUENCE [MRNA]</scope>
    <scope>PROTEIN SEQUENCE OF 21-35; 47-66 AND 265-280</scope>
    <scope>SUBCELLULAR LOCATION</scope>
    <scope>GLYCOSYLATION</scope>
    <scope>TISSUE SPECIFICITY</scope>
    <source>
        <strain>White leghorn</strain>
        <tissue>Ovarian follicle</tissue>
    </source>
</reference>
<reference key="2">
    <citation type="journal article" date="2005" name="BMC Evol. Biol.">
        <title>Testing for adaptive evolution of the female reproductive protein ZPC in mammals, birds and fishes reveals problems with the M7-M8 likelihood ratio test.</title>
        <authorList>
            <person name="Berlin S."/>
            <person name="Smith N.G."/>
        </authorList>
    </citation>
    <scope>NUCLEOTIDE SEQUENCE [GENOMIC DNA]</scope>
</reference>
<reference key="3">
    <citation type="submission" date="1999-08" db="EMBL/GenBank/DDBJ databases">
        <title>Gallus gallus zona pellucida C protein gene.</title>
        <authorList>
            <person name="Kono Y."/>
            <person name="Matsuda T."/>
        </authorList>
    </citation>
    <scope>NUCLEOTIDE SEQUENCE [GENOMIC DNA]</scope>
    <source>
        <tissue>Liver</tissue>
    </source>
</reference>
<reference key="4">
    <citation type="journal article" date="2004" name="Biol. Reprod.">
        <title>Interaction of sperm with purified native chicken ZP1 and ZPC proteins.</title>
        <authorList>
            <person name="Bausek N."/>
            <person name="Ruckenbauer H.H."/>
            <person name="Pfeifer S."/>
            <person name="Schneider W.J."/>
            <person name="Wohlrab F."/>
        </authorList>
    </citation>
    <scope>FUNCTION</scope>
    <scope>TISSUE SPECIFICITY</scope>
</reference>
<reference key="5">
    <citation type="journal article" date="2010" name="Cell">
        <title>Insights into egg coat assembly and egg-sperm interaction from the X-ray structure of full-length ZP3.</title>
        <authorList>
            <person name="Han L."/>
            <person name="Monne M."/>
            <person name="Okumura H."/>
            <person name="Schwend T."/>
            <person name="Cherry A.L."/>
            <person name="Flot D."/>
            <person name="Matsuda T."/>
            <person name="Jovine L."/>
        </authorList>
    </citation>
    <scope>X-RAY CRYSTALLOGRAPHY (2.0 ANGSTROMS) OF 53-383 OF MUTANT GLN-159</scope>
    <scope>FUNCTION</scope>
    <scope>GLYCOSYLATION AT ASN-159 AND THR-168</scope>
    <scope>SUBUNIT</scope>
    <scope>SUBCELLULAR LOCATION</scope>
    <scope>IDENTIFICATION BY MASS SPECTROMETRY</scope>
    <scope>MUTAGENESIS OF CYS-58; CYS-90; ARG-142; CYS-152; ASN-159; THR-168; GLU-196; CYS-229; PRO-235; PRO-241; CYS-251; TYR-292; CYS-313; CYS-332; CYS-334; CYS-335; CYS-340 AND 359-ARG--ARG-362</scope>
    <scope>DISULFIDE BONDS</scope>
</reference>
<proteinExistence type="evidence at protein level"/>
<dbReference type="EMBL" id="D89097">
    <property type="protein sequence ID" value="BAA13760.3"/>
    <property type="molecule type" value="mRNA"/>
</dbReference>
<dbReference type="EMBL" id="AY628608">
    <property type="protein sequence ID" value="AAV35179.1"/>
    <property type="status" value="ALT_INIT"/>
    <property type="molecule type" value="Genomic_DNA"/>
</dbReference>
<dbReference type="EMBL" id="AY628609">
    <property type="protein sequence ID" value="AAV35180.1"/>
    <property type="status" value="ALT_INIT"/>
    <property type="molecule type" value="Genomic_DNA"/>
</dbReference>
<dbReference type="EMBL" id="AY628610">
    <property type="protein sequence ID" value="AAV35181.1"/>
    <property type="status" value="ALT_INIT"/>
    <property type="molecule type" value="Genomic_DNA"/>
</dbReference>
<dbReference type="EMBL" id="AY628611">
    <property type="protein sequence ID" value="AAV35182.1"/>
    <property type="status" value="ALT_INIT"/>
    <property type="molecule type" value="Genomic_DNA"/>
</dbReference>
<dbReference type="EMBL" id="AY628612">
    <property type="protein sequence ID" value="AAV35183.1"/>
    <property type="status" value="ALT_INIT"/>
    <property type="molecule type" value="Genomic_DNA"/>
</dbReference>
<dbReference type="EMBL" id="AY628613">
    <property type="protein sequence ID" value="AAV35184.1"/>
    <property type="status" value="ALT_INIT"/>
    <property type="molecule type" value="Genomic_DNA"/>
</dbReference>
<dbReference type="EMBL" id="AY628614">
    <property type="protein sequence ID" value="AAV35185.1"/>
    <property type="status" value="ALT_INIT"/>
    <property type="molecule type" value="Genomic_DNA"/>
</dbReference>
<dbReference type="EMBL" id="AY628615">
    <property type="protein sequence ID" value="AAV35186.1"/>
    <property type="status" value="ALT_INIT"/>
    <property type="molecule type" value="Genomic_DNA"/>
</dbReference>
<dbReference type="EMBL" id="AY628616">
    <property type="protein sequence ID" value="AAV35187.1"/>
    <property type="status" value="ALT_INIT"/>
    <property type="molecule type" value="Genomic_DNA"/>
</dbReference>
<dbReference type="EMBL" id="AY628617">
    <property type="protein sequence ID" value="AAV35188.1"/>
    <property type="status" value="ALT_INIT"/>
    <property type="molecule type" value="Genomic_DNA"/>
</dbReference>
<dbReference type="EMBL" id="AY628618">
    <property type="protein sequence ID" value="AAV35189.1"/>
    <property type="status" value="ALT_INIT"/>
    <property type="molecule type" value="Genomic_DNA"/>
</dbReference>
<dbReference type="EMBL" id="AY628619">
    <property type="protein sequence ID" value="AAV35190.1"/>
    <property type="status" value="ALT_INIT"/>
    <property type="molecule type" value="Genomic_DNA"/>
</dbReference>
<dbReference type="EMBL" id="AY628620">
    <property type="protein sequence ID" value="AAV35191.1"/>
    <property type="status" value="ALT_INIT"/>
    <property type="molecule type" value="Genomic_DNA"/>
</dbReference>
<dbReference type="EMBL" id="AY628621">
    <property type="protein sequence ID" value="AAV35192.1"/>
    <property type="status" value="ALT_INIT"/>
    <property type="molecule type" value="Genomic_DNA"/>
</dbReference>
<dbReference type="EMBL" id="AY628622">
    <property type="protein sequence ID" value="AAV35193.1"/>
    <property type="status" value="ALT_INIT"/>
    <property type="molecule type" value="Genomic_DNA"/>
</dbReference>
<dbReference type="EMBL" id="AY628623">
    <property type="protein sequence ID" value="AAV35194.1"/>
    <property type="status" value="ALT_INIT"/>
    <property type="molecule type" value="Genomic_DNA"/>
</dbReference>
<dbReference type="EMBL" id="AY628624">
    <property type="protein sequence ID" value="AAV35195.1"/>
    <property type="status" value="ALT_INIT"/>
    <property type="molecule type" value="Genomic_DNA"/>
</dbReference>
<dbReference type="EMBL" id="AY628625">
    <property type="protein sequence ID" value="AAV35196.1"/>
    <property type="status" value="ALT_INIT"/>
    <property type="molecule type" value="Genomic_DNA"/>
</dbReference>
<dbReference type="EMBL" id="AY628626">
    <property type="protein sequence ID" value="AAV35197.1"/>
    <property type="status" value="ALT_INIT"/>
    <property type="molecule type" value="Genomic_DNA"/>
</dbReference>
<dbReference type="EMBL" id="AY628627">
    <property type="protein sequence ID" value="AAV35198.1"/>
    <property type="status" value="ALT_INIT"/>
    <property type="molecule type" value="Genomic_DNA"/>
</dbReference>
<dbReference type="EMBL" id="AY628628">
    <property type="protein sequence ID" value="AAV35199.1"/>
    <property type="status" value="ALT_INIT"/>
    <property type="molecule type" value="Genomic_DNA"/>
</dbReference>
<dbReference type="EMBL" id="AY628629">
    <property type="protein sequence ID" value="AAV35200.1"/>
    <property type="status" value="ALT_INIT"/>
    <property type="molecule type" value="Genomic_DNA"/>
</dbReference>
<dbReference type="EMBL" id="AY628630">
    <property type="protein sequence ID" value="AAV35201.1"/>
    <property type="status" value="ALT_INIT"/>
    <property type="molecule type" value="Genomic_DNA"/>
</dbReference>
<dbReference type="EMBL" id="AB031033">
    <property type="protein sequence ID" value="BAA83418.1"/>
    <property type="status" value="ALT_INIT"/>
    <property type="molecule type" value="Genomic_DNA"/>
</dbReference>
<dbReference type="RefSeq" id="NP_989720.3">
    <property type="nucleotide sequence ID" value="NM_204389.2"/>
</dbReference>
<dbReference type="PDB" id="3NK3">
    <property type="method" value="X-ray"/>
    <property type="resolution" value="2.60 A"/>
    <property type="chains" value="A/B=53-347, C/D=359-382"/>
</dbReference>
<dbReference type="PDB" id="3NK4">
    <property type="method" value="X-ray"/>
    <property type="resolution" value="2.00 A"/>
    <property type="chains" value="A/B=53-347, C/D=359-382"/>
</dbReference>
<dbReference type="PDBsum" id="3NK3"/>
<dbReference type="PDBsum" id="3NK4"/>
<dbReference type="SMR" id="P79762"/>
<dbReference type="FunCoup" id="P79762">
    <property type="interactions" value="122"/>
</dbReference>
<dbReference type="STRING" id="9031.ENSGALP00000002368"/>
<dbReference type="GlyCosmos" id="P79762">
    <property type="glycosylation" value="2 sites, No reported glycans"/>
</dbReference>
<dbReference type="GlyGen" id="P79762">
    <property type="glycosylation" value="2 sites"/>
</dbReference>
<dbReference type="iPTMnet" id="P79762"/>
<dbReference type="PaxDb" id="9031-ENSGALP00000002368"/>
<dbReference type="GeneID" id="378906"/>
<dbReference type="KEGG" id="gga:378906"/>
<dbReference type="CTD" id="7784"/>
<dbReference type="VEuPathDB" id="HostDB:geneid_378906"/>
<dbReference type="eggNOG" id="ENOG502QSZF">
    <property type="taxonomic scope" value="Eukaryota"/>
</dbReference>
<dbReference type="HOGENOM" id="CLU_047091_1_1_1"/>
<dbReference type="InParanoid" id="P79762"/>
<dbReference type="OrthoDB" id="8880842at2759"/>
<dbReference type="PhylomeDB" id="P79762"/>
<dbReference type="TreeFam" id="TF331369"/>
<dbReference type="EvolutionaryTrace" id="P79762"/>
<dbReference type="PRO" id="PR:P79762"/>
<dbReference type="Proteomes" id="UP000000539">
    <property type="component" value="Chromosome 10"/>
</dbReference>
<dbReference type="Bgee" id="ENSGALG00000001559">
    <property type="expression patterns" value="Expressed in testis and 4 other cell types or tissues"/>
</dbReference>
<dbReference type="GO" id="GO:0045177">
    <property type="term" value="C:apical part of cell"/>
    <property type="evidence" value="ECO:0000314"/>
    <property type="project" value="AgBase"/>
</dbReference>
<dbReference type="GO" id="GO:0031012">
    <property type="term" value="C:extracellular matrix"/>
    <property type="evidence" value="ECO:0000318"/>
    <property type="project" value="GO_Central"/>
</dbReference>
<dbReference type="GO" id="GO:0005615">
    <property type="term" value="C:extracellular space"/>
    <property type="evidence" value="ECO:0000314"/>
    <property type="project" value="AgBase"/>
</dbReference>
<dbReference type="GO" id="GO:0005886">
    <property type="term" value="C:plasma membrane"/>
    <property type="evidence" value="ECO:0007669"/>
    <property type="project" value="UniProtKB-SubCell"/>
</dbReference>
<dbReference type="GO" id="GO:0032190">
    <property type="term" value="F:acrosin binding"/>
    <property type="evidence" value="ECO:0000318"/>
    <property type="project" value="GO_Central"/>
</dbReference>
<dbReference type="GO" id="GO:0042802">
    <property type="term" value="F:identical protein binding"/>
    <property type="evidence" value="ECO:0000353"/>
    <property type="project" value="IntAct"/>
</dbReference>
<dbReference type="GO" id="GO:0035804">
    <property type="term" value="F:structural constituent of egg coat"/>
    <property type="evidence" value="ECO:0000250"/>
    <property type="project" value="UniProtKB"/>
</dbReference>
<dbReference type="GO" id="GO:0007339">
    <property type="term" value="P:binding of sperm to zona pellucida"/>
    <property type="evidence" value="ECO:0000318"/>
    <property type="project" value="GO_Central"/>
</dbReference>
<dbReference type="GO" id="GO:0035803">
    <property type="term" value="P:egg coat formation"/>
    <property type="evidence" value="ECO:0000318"/>
    <property type="project" value="GO_Central"/>
</dbReference>
<dbReference type="GO" id="GO:2000344">
    <property type="term" value="P:positive regulation of acrosome reaction"/>
    <property type="evidence" value="ECO:0000318"/>
    <property type="project" value="GO_Central"/>
</dbReference>
<dbReference type="GO" id="GO:0032570">
    <property type="term" value="P:response to progesterone"/>
    <property type="evidence" value="ECO:0000250"/>
    <property type="project" value="AgBase"/>
</dbReference>
<dbReference type="GO" id="GO:0033574">
    <property type="term" value="P:response to testosterone"/>
    <property type="evidence" value="ECO:0000250"/>
    <property type="project" value="AgBase"/>
</dbReference>
<dbReference type="FunFam" id="2.60.40.3210:FF:000001">
    <property type="entry name" value="Zona pellucida sperm-binding protein 3"/>
    <property type="match status" value="1"/>
</dbReference>
<dbReference type="FunFam" id="2.60.40.4100:FF:000002">
    <property type="entry name" value="Zona pellucida sperm-binding protein 3"/>
    <property type="match status" value="1"/>
</dbReference>
<dbReference type="Gene3D" id="2.60.40.4100">
    <property type="entry name" value="Zona pellucida, ZP-C domain"/>
    <property type="match status" value="1"/>
</dbReference>
<dbReference type="Gene3D" id="2.60.40.3210">
    <property type="entry name" value="Zona pellucida, ZP-N domain"/>
    <property type="match status" value="1"/>
</dbReference>
<dbReference type="InterPro" id="IPR055355">
    <property type="entry name" value="ZP-C"/>
</dbReference>
<dbReference type="InterPro" id="IPR042235">
    <property type="entry name" value="ZP-C_dom"/>
</dbReference>
<dbReference type="InterPro" id="IPR055356">
    <property type="entry name" value="ZP-N"/>
</dbReference>
<dbReference type="InterPro" id="IPR048290">
    <property type="entry name" value="ZP_chr"/>
</dbReference>
<dbReference type="InterPro" id="IPR001507">
    <property type="entry name" value="ZP_dom"/>
</dbReference>
<dbReference type="InterPro" id="IPR017977">
    <property type="entry name" value="ZP_dom_CS"/>
</dbReference>
<dbReference type="PANTHER" id="PTHR11576">
    <property type="entry name" value="ZONA PELLUCIDA SPERM-BINDING PROTEIN 3"/>
    <property type="match status" value="1"/>
</dbReference>
<dbReference type="PANTHER" id="PTHR11576:SF2">
    <property type="entry name" value="ZONA PELLUCIDA SPERM-BINDING PROTEIN 3"/>
    <property type="match status" value="1"/>
</dbReference>
<dbReference type="Pfam" id="PF00100">
    <property type="entry name" value="Zona_pellucida"/>
    <property type="match status" value="1"/>
</dbReference>
<dbReference type="Pfam" id="PF23344">
    <property type="entry name" value="ZP-N"/>
    <property type="match status" value="1"/>
</dbReference>
<dbReference type="PRINTS" id="PR00023">
    <property type="entry name" value="ZPELLUCIDA"/>
</dbReference>
<dbReference type="SMART" id="SM00241">
    <property type="entry name" value="ZP"/>
    <property type="match status" value="1"/>
</dbReference>
<dbReference type="PROSITE" id="PS00682">
    <property type="entry name" value="ZP_1"/>
    <property type="match status" value="1"/>
</dbReference>
<dbReference type="PROSITE" id="PS51034">
    <property type="entry name" value="ZP_2"/>
    <property type="match status" value="1"/>
</dbReference>
<accession>P79762</accession>
<accession>Q4VU46</accession>
<accession>Q4VU49</accession>
<accession>Q4VU50</accession>
<accession>Q4VU53</accession>
<accession>Q4VU54</accession>
<accession>Q4VU57</accession>
<accession>Q4VU62</accession>
<accession>Q4VU63</accession>
<accession>Q4VU66</accession>
<accession>Q9PWF8</accession>
<keyword id="KW-0002">3D-structure</keyword>
<keyword id="KW-1003">Cell membrane</keyword>
<keyword id="KW-0165">Cleavage on pair of basic residues</keyword>
<keyword id="KW-0903">Direct protein sequencing</keyword>
<keyword id="KW-1015">Disulfide bond</keyword>
<keyword id="KW-0272">Extracellular matrix</keyword>
<keyword id="KW-0278">Fertilization</keyword>
<keyword id="KW-0325">Glycoprotein</keyword>
<keyword id="KW-0472">Membrane</keyword>
<keyword id="KW-1185">Reference proteome</keyword>
<keyword id="KW-0964">Secreted</keyword>
<keyword id="KW-0732">Signal</keyword>
<keyword id="KW-0812">Transmembrane</keyword>
<keyword id="KW-1133">Transmembrane helix</keyword>
<gene>
    <name type="primary">ZP3</name>
    <name type="synonym">ZPC</name>
</gene>
<name>ZP3_CHICK</name>
<comment type="function">
    <text evidence="5 6">Component of the zona pellucida, which mediates species-specific sperm binding. Directly binds to sperm. Important for egg fertilization.</text>
</comment>
<comment type="subunit">
    <text evidence="1">Homodimer. Forms higher oligomers, once its C-terminus has been proteolytically removed. Forms heterooligomers with other zona pellucida glycoproteins (By similarity).</text>
</comment>
<comment type="interaction">
    <interactant intactId="EBI-2942236">
        <id>P79762</id>
    </interactant>
    <interactant intactId="EBI-2942236">
        <id>P79762</id>
        <label>ZP3</label>
    </interactant>
    <organismsDiffer>false</organismsDiffer>
    <experiments>3</experiments>
</comment>
<comment type="subcellular location">
    <molecule>Processed zona pellucida sperm-binding protein 3</molecule>
    <subcellularLocation>
        <location evidence="4">Secreted</location>
        <location evidence="4">Extracellular space</location>
        <location evidence="4">Extracellular matrix</location>
    </subcellularLocation>
    <text evidence="7">The glycoproteinaceous translucent extracellular matrix that surrounds the mammalian oocyte is called zona pellucida.</text>
</comment>
<comment type="subcellular location">
    <subcellularLocation>
        <location evidence="4 6">Cell membrane</location>
        <topology evidence="2">Single-pass type I membrane protein</topology>
    </subcellularLocation>
</comment>
<comment type="tissue specificity">
    <text evidence="4 5">Detected in the ovarian perivitteline layer. Detected in granulosa cells in ovarian follicle (at protein level). Detected in granulosa cells in ovarian follicle.</text>
</comment>
<comment type="domain">
    <text evidence="1">The ZP domain is involved in the polymerization of the ZP proteins to form the zona pellucida.</text>
</comment>
<comment type="PTM">
    <text>Proteolytically cleaved before the transmembrane segment to yield the secreted ectodomain incorporated in the zona pellucida.</text>
</comment>
<comment type="PTM">
    <text>N-glycosylated.</text>
</comment>
<comment type="PTM">
    <text evidence="6">O-glycosylated. O-glycosylation at Thr-168 is important for efficient interaction with the sperm head.</text>
</comment>
<comment type="similarity">
    <text evidence="7">Belongs to the ZP domain family. ZPC subfamily.</text>
</comment>
<comment type="sequence caution" evidence="7">
    <conflict type="erroneous initiation">
        <sequence resource="EMBL-CDS" id="AAV35179"/>
    </conflict>
    <text>Extended N-terminus.</text>
</comment>
<comment type="sequence caution" evidence="7">
    <conflict type="erroneous initiation">
        <sequence resource="EMBL-CDS" id="AAV35180"/>
    </conflict>
    <text>Extended N-terminus.</text>
</comment>
<comment type="sequence caution" evidence="7">
    <conflict type="erroneous initiation">
        <sequence resource="EMBL-CDS" id="AAV35181"/>
    </conflict>
    <text>Extended N-terminus.</text>
</comment>
<comment type="sequence caution" evidence="7">
    <conflict type="erroneous initiation">
        <sequence resource="EMBL-CDS" id="AAV35182"/>
    </conflict>
    <text>Extended N-terminus.</text>
</comment>
<comment type="sequence caution" evidence="7">
    <conflict type="erroneous initiation">
        <sequence resource="EMBL-CDS" id="AAV35183"/>
    </conflict>
    <text>Extended N-terminus.</text>
</comment>
<comment type="sequence caution" evidence="7">
    <conflict type="erroneous initiation">
        <sequence resource="EMBL-CDS" id="AAV35184"/>
    </conflict>
    <text>Extended N-terminus.</text>
</comment>
<comment type="sequence caution" evidence="7">
    <conflict type="erroneous initiation">
        <sequence resource="EMBL-CDS" id="AAV35185"/>
    </conflict>
    <text>Extended N-terminus.</text>
</comment>
<comment type="sequence caution" evidence="7">
    <conflict type="erroneous initiation">
        <sequence resource="EMBL-CDS" id="AAV35186"/>
    </conflict>
    <text>Extended N-terminus.</text>
</comment>
<comment type="sequence caution" evidence="7">
    <conflict type="erroneous initiation">
        <sequence resource="EMBL-CDS" id="AAV35187"/>
    </conflict>
    <text>Extended N-terminus.</text>
</comment>
<comment type="sequence caution" evidence="7">
    <conflict type="erroneous initiation">
        <sequence resource="EMBL-CDS" id="AAV35188"/>
    </conflict>
    <text>Extended N-terminus.</text>
</comment>
<comment type="sequence caution" evidence="7">
    <conflict type="erroneous initiation">
        <sequence resource="EMBL-CDS" id="AAV35189"/>
    </conflict>
    <text>Extended N-terminus.</text>
</comment>
<comment type="sequence caution" evidence="7">
    <conflict type="erroneous initiation">
        <sequence resource="EMBL-CDS" id="AAV35190"/>
    </conflict>
    <text>Extended N-terminus.</text>
</comment>
<comment type="sequence caution" evidence="7">
    <conflict type="erroneous initiation">
        <sequence resource="EMBL-CDS" id="AAV35191"/>
    </conflict>
    <text>Extended N-terminus.</text>
</comment>
<comment type="sequence caution" evidence="7">
    <conflict type="erroneous initiation">
        <sequence resource="EMBL-CDS" id="AAV35192"/>
    </conflict>
    <text>Extended N-terminus.</text>
</comment>
<comment type="sequence caution" evidence="7">
    <conflict type="erroneous initiation">
        <sequence resource="EMBL-CDS" id="AAV35193"/>
    </conflict>
    <text>Extended N-terminus.</text>
</comment>
<comment type="sequence caution" evidence="7">
    <conflict type="erroneous initiation">
        <sequence resource="EMBL-CDS" id="AAV35194"/>
    </conflict>
    <text>Extended N-terminus.</text>
</comment>
<comment type="sequence caution" evidence="7">
    <conflict type="erroneous initiation">
        <sequence resource="EMBL-CDS" id="AAV35195"/>
    </conflict>
    <text>Extended N-terminus.</text>
</comment>
<comment type="sequence caution" evidence="7">
    <conflict type="erroneous initiation">
        <sequence resource="EMBL-CDS" id="AAV35196"/>
    </conflict>
    <text>Extended N-terminus.</text>
</comment>
<comment type="sequence caution" evidence="7">
    <conflict type="erroneous initiation">
        <sequence resource="EMBL-CDS" id="AAV35197"/>
    </conflict>
    <text>Extended N-terminus.</text>
</comment>
<comment type="sequence caution" evidence="7">
    <conflict type="erroneous initiation">
        <sequence resource="EMBL-CDS" id="AAV35198"/>
    </conflict>
    <text>Extended N-terminus.</text>
</comment>
<comment type="sequence caution" evidence="7">
    <conflict type="erroneous initiation">
        <sequence resource="EMBL-CDS" id="AAV35199"/>
    </conflict>
    <text>Extended N-terminus.</text>
</comment>
<comment type="sequence caution" evidence="7">
    <conflict type="erroneous initiation">
        <sequence resource="EMBL-CDS" id="AAV35200"/>
    </conflict>
    <text>Extended N-terminus.</text>
</comment>
<comment type="sequence caution" evidence="7">
    <conflict type="erroneous initiation">
        <sequence resource="EMBL-CDS" id="AAV35201"/>
    </conflict>
    <text>Extended N-terminus.</text>
</comment>
<comment type="sequence caution" evidence="7">
    <conflict type="erroneous initiation">
        <sequence resource="EMBL-CDS" id="BAA83418"/>
    </conflict>
    <text>Extended N-terminus.</text>
</comment>